<sequence length="1069" mass="118979">MLVRRLFQPSTLHWAWRTTALNHPLGRHQGGLRWTHSGGRSYRAVIFDTGGVLVPSPGTVAVGWEVQNHVPSGTIVKAFIRGGDSGPWIRFIKGEITTEHFLEEFGRLCSEIAKTSVPVSSYFSLLTSEQVTKQFPVMTQAISQIRAKGLQTAVLTNNFHLSSGESFLPLDRKQFDVVVESCLEGICKPDPRIFQLCLQRLSLQPSEAIFLDDLGSNLKVAASLGIHTIKVDRPETAVKELEALLGFPLHLGVPNTRPVRKTMAIPQDALEKYLKGLLGTHSTGPMELLQFDHGQSNPTYYIRLADRQLVLRKKPSGTLLPSAHAIEREFRIMKALANAGVPVPTVLDLCEDSSIIGTPFYLMEYCPGIIYKDPSLPGLEPSRREAIYTAMNQVLCRIHSVDLQATSLDSFGKQGDYIPRQVQTWTKQYRAAETSSIPAMERLIQWLPLHLPRQQRTTLVHGDFRLDNLIFHPEKAEVLAVLDWELSTLGDPFADVAYSCLAYYLPSSFPILRGFRDQDVTKLGIPTVEEYFRMYCLNMGIPPIDNWNFYMAFSFFRVAAILQGVYKRSLTGQASSATAQQSGKLTESMAELAWDFATKEGFRVFKEMPATKTLSRSYHAWAGPRSPRTPKGVRGHSTVAAASPSHEAKGGLVISPEGLSPAVRKLYEQLVQFIEQKVYPLEPELQRHQASADRWSPSPLIEDLKEKAKAEGLWNLFLPLETDPEKKYGAGLTNVEYAHLCEVMGMSLYASEIFNCSAPDTGNMEILVRYGTEEQKARWLVPLLEGRIRSCFAMTEPQVASSDASNIEASIKEEDGCYVINGHKWWTSGILDPRCKLCVFMGKTDPQAPRHQQQSMLLVPMDSPGITVIRPLSVFGLEDPPGGHGEVRFKDVRVPKENILLGPGRGFEIAQGRLGPGRIHHCMRLIGYSERALALMKTRVMSRTAFGKPLVEQGTILADIARSRVEIEQARLLVLKAAHLMDVAGNKTAALDIAMIKMVVPSMAYHVIDRAIQAFGAAGLSSDYPLAQFFGWARALRFADGPDEVHQLTVAKMELKNQSRMQEPAVPRV</sequence>
<gene>
    <name type="primary">Acad10</name>
</gene>
<dbReference type="EC" id="1.3.99.-"/>
<dbReference type="EMBL" id="AK050332">
    <property type="protein sequence ID" value="BAC34193.1"/>
    <property type="status" value="ALT_FRAME"/>
    <property type="molecule type" value="mRNA"/>
</dbReference>
<dbReference type="EMBL" id="BC027825">
    <property type="protein sequence ID" value="AAH27825.1"/>
    <property type="molecule type" value="mRNA"/>
</dbReference>
<dbReference type="EMBL" id="BC029047">
    <property type="protein sequence ID" value="AAH29047.1"/>
    <property type="status" value="ALT_INIT"/>
    <property type="molecule type" value="mRNA"/>
</dbReference>
<dbReference type="CCDS" id="CCDS51643.1"/>
<dbReference type="RefSeq" id="NP_082313.2">
    <property type="nucleotide sequence ID" value="NM_028037.4"/>
</dbReference>
<dbReference type="RefSeq" id="XP_006530521.1">
    <property type="nucleotide sequence ID" value="XM_006530458.5"/>
</dbReference>
<dbReference type="RefSeq" id="XP_006530523.1">
    <property type="nucleotide sequence ID" value="XM_006530460.3"/>
</dbReference>
<dbReference type="RefSeq" id="XP_006530524.1">
    <property type="nucleotide sequence ID" value="XM_006530461.3"/>
</dbReference>
<dbReference type="SMR" id="Q8K370"/>
<dbReference type="BioGRID" id="215074">
    <property type="interactions" value="7"/>
</dbReference>
<dbReference type="FunCoup" id="Q8K370">
    <property type="interactions" value="1947"/>
</dbReference>
<dbReference type="IntAct" id="Q8K370">
    <property type="interactions" value="2"/>
</dbReference>
<dbReference type="MINT" id="Q8K370"/>
<dbReference type="STRING" id="10090.ENSMUSP00000031412"/>
<dbReference type="GlyGen" id="Q8K370">
    <property type="glycosylation" value="1 site, 1 O-linked glycan (1 site)"/>
</dbReference>
<dbReference type="iPTMnet" id="Q8K370"/>
<dbReference type="PhosphoSitePlus" id="Q8K370"/>
<dbReference type="SwissPalm" id="Q8K370"/>
<dbReference type="jPOST" id="Q8K370"/>
<dbReference type="PaxDb" id="10090-ENSMUSP00000107400"/>
<dbReference type="PeptideAtlas" id="Q8K370"/>
<dbReference type="ProteomicsDB" id="285578"/>
<dbReference type="Pumba" id="Q8K370"/>
<dbReference type="DNASU" id="71985"/>
<dbReference type="Ensembl" id="ENSMUST00000031412.12">
    <property type="protein sequence ID" value="ENSMUSP00000031412.6"/>
    <property type="gene ID" value="ENSMUSG00000029456.13"/>
</dbReference>
<dbReference type="Ensembl" id="ENSMUST00000111770.2">
    <property type="protein sequence ID" value="ENSMUSP00000107400.2"/>
    <property type="gene ID" value="ENSMUSG00000029456.13"/>
</dbReference>
<dbReference type="GeneID" id="71985"/>
<dbReference type="KEGG" id="mmu:71985"/>
<dbReference type="UCSC" id="uc008zjy.1">
    <property type="organism name" value="mouse"/>
</dbReference>
<dbReference type="AGR" id="MGI:1919235"/>
<dbReference type="CTD" id="80724"/>
<dbReference type="MGI" id="MGI:1919235">
    <property type="gene designation" value="Acad10"/>
</dbReference>
<dbReference type="VEuPathDB" id="HostDB:ENSMUSG00000029456"/>
<dbReference type="eggNOG" id="KOG1469">
    <property type="taxonomic scope" value="Eukaryota"/>
</dbReference>
<dbReference type="eggNOG" id="KOG3085">
    <property type="taxonomic scope" value="Eukaryota"/>
</dbReference>
<dbReference type="GeneTree" id="ENSGT00940000161620"/>
<dbReference type="HOGENOM" id="CLU_007526_2_1_1"/>
<dbReference type="InParanoid" id="Q8K370"/>
<dbReference type="OMA" id="AIAMIKI"/>
<dbReference type="OrthoDB" id="434771at2759"/>
<dbReference type="PhylomeDB" id="Q8K370"/>
<dbReference type="TreeFam" id="TF333953"/>
<dbReference type="Reactome" id="R-MMU-77289">
    <property type="pathway name" value="Mitochondrial Fatty Acid Beta-Oxidation"/>
</dbReference>
<dbReference type="BioGRID-ORCS" id="71985">
    <property type="hits" value="6 hits in 63 CRISPR screens"/>
</dbReference>
<dbReference type="ChiTaRS" id="Acad10">
    <property type="organism name" value="mouse"/>
</dbReference>
<dbReference type="PRO" id="PR:Q8K370"/>
<dbReference type="Proteomes" id="UP000000589">
    <property type="component" value="Chromosome 5"/>
</dbReference>
<dbReference type="RNAct" id="Q8K370">
    <property type="molecule type" value="protein"/>
</dbReference>
<dbReference type="Bgee" id="ENSMUSG00000029456">
    <property type="expression patterns" value="Expressed in proximal tubule and 63 other cell types or tissues"/>
</dbReference>
<dbReference type="GO" id="GO:0005739">
    <property type="term" value="C:mitochondrion"/>
    <property type="evidence" value="ECO:0007005"/>
    <property type="project" value="MGI"/>
</dbReference>
<dbReference type="GO" id="GO:0050660">
    <property type="term" value="F:flavin adenine dinucleotide binding"/>
    <property type="evidence" value="ECO:0007669"/>
    <property type="project" value="InterPro"/>
</dbReference>
<dbReference type="GO" id="GO:0016627">
    <property type="term" value="F:oxidoreductase activity, acting on the CH-CH group of donors"/>
    <property type="evidence" value="ECO:0007669"/>
    <property type="project" value="InterPro"/>
</dbReference>
<dbReference type="GO" id="GO:0046395">
    <property type="term" value="P:carboxylic acid catabolic process"/>
    <property type="evidence" value="ECO:0007669"/>
    <property type="project" value="UniProtKB-ARBA"/>
</dbReference>
<dbReference type="CDD" id="cd05154">
    <property type="entry name" value="ACAD10_11_N-like"/>
    <property type="match status" value="1"/>
</dbReference>
<dbReference type="CDD" id="cd02603">
    <property type="entry name" value="HAD_sEH-N_like"/>
    <property type="match status" value="1"/>
</dbReference>
<dbReference type="FunFam" id="2.40.110.10:FF:000002">
    <property type="entry name" value="Acyl-CoA dehydrogenase fadE12"/>
    <property type="match status" value="1"/>
</dbReference>
<dbReference type="FunFam" id="1.20.140.10:FF:000018">
    <property type="entry name" value="Acyl-CoA dehydrogenase family member 10"/>
    <property type="match status" value="1"/>
</dbReference>
<dbReference type="FunFam" id="3.30.200.20:FF:000343">
    <property type="entry name" value="Acyl-CoA dehydrogenase family member 10"/>
    <property type="match status" value="1"/>
</dbReference>
<dbReference type="FunFam" id="3.90.1200.10:FF:000009">
    <property type="entry name" value="Acyl-CoA dehydrogenase family member 11"/>
    <property type="match status" value="1"/>
</dbReference>
<dbReference type="FunFam" id="1.10.540.10:FF:000016">
    <property type="entry name" value="acyl-CoA dehydrogenase family member 11"/>
    <property type="match status" value="1"/>
</dbReference>
<dbReference type="Gene3D" id="3.90.1200.10">
    <property type="match status" value="1"/>
</dbReference>
<dbReference type="Gene3D" id="1.10.540.10">
    <property type="entry name" value="Acyl-CoA dehydrogenase/oxidase, N-terminal domain"/>
    <property type="match status" value="1"/>
</dbReference>
<dbReference type="Gene3D" id="2.40.110.10">
    <property type="entry name" value="Butyryl-CoA Dehydrogenase, subunit A, domain 2"/>
    <property type="match status" value="1"/>
</dbReference>
<dbReference type="Gene3D" id="1.20.140.10">
    <property type="entry name" value="Butyryl-CoA Dehydrogenase, subunit A, domain 3"/>
    <property type="match status" value="1"/>
</dbReference>
<dbReference type="Gene3D" id="3.40.50.1000">
    <property type="entry name" value="HAD superfamily/HAD-like"/>
    <property type="match status" value="1"/>
</dbReference>
<dbReference type="Gene3D" id="3.30.200.20">
    <property type="entry name" value="Phosphorylase Kinase, domain 1"/>
    <property type="match status" value="1"/>
</dbReference>
<dbReference type="Gene3D" id="1.10.150.240">
    <property type="entry name" value="Putative phosphatase, domain 2"/>
    <property type="match status" value="1"/>
</dbReference>
<dbReference type="InterPro" id="IPR052898">
    <property type="entry name" value="ACAD10-like"/>
</dbReference>
<dbReference type="InterPro" id="IPR041726">
    <property type="entry name" value="ACAD10_11_N"/>
</dbReference>
<dbReference type="InterPro" id="IPR006091">
    <property type="entry name" value="Acyl-CoA_Oxase/DH_mid-dom"/>
</dbReference>
<dbReference type="InterPro" id="IPR046373">
    <property type="entry name" value="Acyl-CoA_Oxase/DH_mid-dom_sf"/>
</dbReference>
<dbReference type="InterPro" id="IPR036250">
    <property type="entry name" value="AcylCo_DH-like_C"/>
</dbReference>
<dbReference type="InterPro" id="IPR009075">
    <property type="entry name" value="AcylCo_DH/oxidase_C"/>
</dbReference>
<dbReference type="InterPro" id="IPR013786">
    <property type="entry name" value="AcylCoA_DH/ox_N"/>
</dbReference>
<dbReference type="InterPro" id="IPR037069">
    <property type="entry name" value="AcylCoA_DH/ox_N_sf"/>
</dbReference>
<dbReference type="InterPro" id="IPR009100">
    <property type="entry name" value="AcylCoA_DH/oxidase_NM_dom_sf"/>
</dbReference>
<dbReference type="InterPro" id="IPR002575">
    <property type="entry name" value="Aminoglycoside_PTrfase"/>
</dbReference>
<dbReference type="InterPro" id="IPR036412">
    <property type="entry name" value="HAD-like_sf"/>
</dbReference>
<dbReference type="InterPro" id="IPR006439">
    <property type="entry name" value="HAD-SF_hydro_IA"/>
</dbReference>
<dbReference type="InterPro" id="IPR011945">
    <property type="entry name" value="HAD-SF_ppase_IA/epoxid_hydro_N"/>
</dbReference>
<dbReference type="InterPro" id="IPR023214">
    <property type="entry name" value="HAD_sf"/>
</dbReference>
<dbReference type="InterPro" id="IPR011009">
    <property type="entry name" value="Kinase-like_dom_sf"/>
</dbReference>
<dbReference type="InterPro" id="IPR023198">
    <property type="entry name" value="PGP-like_dom2"/>
</dbReference>
<dbReference type="NCBIfam" id="TIGR02247">
    <property type="entry name" value="HAD-1A3-hyp"/>
    <property type="match status" value="1"/>
</dbReference>
<dbReference type="NCBIfam" id="TIGR01509">
    <property type="entry name" value="HAD-SF-IA-v3"/>
    <property type="match status" value="1"/>
</dbReference>
<dbReference type="PANTHER" id="PTHR47829:SF3">
    <property type="entry name" value="AMINOGLYCOSIDE PHOSPHOTRANSFERASE DOMAIN-CONTAINING PROTEIN"/>
    <property type="match status" value="1"/>
</dbReference>
<dbReference type="PANTHER" id="PTHR47829">
    <property type="entry name" value="HYDROLASE, PUTATIVE (AFU_ORTHOLOGUE AFUA_1G12880)-RELATED"/>
    <property type="match status" value="1"/>
</dbReference>
<dbReference type="Pfam" id="PF00441">
    <property type="entry name" value="Acyl-CoA_dh_1"/>
    <property type="match status" value="1"/>
</dbReference>
<dbReference type="Pfam" id="PF02770">
    <property type="entry name" value="Acyl-CoA_dh_M"/>
    <property type="match status" value="1"/>
</dbReference>
<dbReference type="Pfam" id="PF02771">
    <property type="entry name" value="Acyl-CoA_dh_N"/>
    <property type="match status" value="1"/>
</dbReference>
<dbReference type="Pfam" id="PF01636">
    <property type="entry name" value="APH"/>
    <property type="match status" value="1"/>
</dbReference>
<dbReference type="Pfam" id="PF00702">
    <property type="entry name" value="Hydrolase"/>
    <property type="match status" value="1"/>
</dbReference>
<dbReference type="PRINTS" id="PR00413">
    <property type="entry name" value="HADHALOGNASE"/>
</dbReference>
<dbReference type="SFLD" id="SFLDG01129">
    <property type="entry name" value="C1.5:_HAD__Beta-PGM__Phosphata"/>
    <property type="match status" value="1"/>
</dbReference>
<dbReference type="SFLD" id="SFLDS00003">
    <property type="entry name" value="Haloacid_Dehalogenase"/>
    <property type="match status" value="1"/>
</dbReference>
<dbReference type="SUPFAM" id="SSF47203">
    <property type="entry name" value="Acyl-CoA dehydrogenase C-terminal domain-like"/>
    <property type="match status" value="1"/>
</dbReference>
<dbReference type="SUPFAM" id="SSF56645">
    <property type="entry name" value="Acyl-CoA dehydrogenase NM domain-like"/>
    <property type="match status" value="1"/>
</dbReference>
<dbReference type="SUPFAM" id="SSF56784">
    <property type="entry name" value="HAD-like"/>
    <property type="match status" value="1"/>
</dbReference>
<dbReference type="SUPFAM" id="SSF56112">
    <property type="entry name" value="Protein kinase-like (PK-like)"/>
    <property type="match status" value="1"/>
</dbReference>
<reference key="1">
    <citation type="journal article" date="2005" name="Science">
        <title>The transcriptional landscape of the mammalian genome.</title>
        <authorList>
            <person name="Carninci P."/>
            <person name="Kasukawa T."/>
            <person name="Katayama S."/>
            <person name="Gough J."/>
            <person name="Frith M.C."/>
            <person name="Maeda N."/>
            <person name="Oyama R."/>
            <person name="Ravasi T."/>
            <person name="Lenhard B."/>
            <person name="Wells C."/>
            <person name="Kodzius R."/>
            <person name="Shimokawa K."/>
            <person name="Bajic V.B."/>
            <person name="Brenner S.E."/>
            <person name="Batalov S."/>
            <person name="Forrest A.R."/>
            <person name="Zavolan M."/>
            <person name="Davis M.J."/>
            <person name="Wilming L.G."/>
            <person name="Aidinis V."/>
            <person name="Allen J.E."/>
            <person name="Ambesi-Impiombato A."/>
            <person name="Apweiler R."/>
            <person name="Aturaliya R.N."/>
            <person name="Bailey T.L."/>
            <person name="Bansal M."/>
            <person name="Baxter L."/>
            <person name="Beisel K.W."/>
            <person name="Bersano T."/>
            <person name="Bono H."/>
            <person name="Chalk A.M."/>
            <person name="Chiu K.P."/>
            <person name="Choudhary V."/>
            <person name="Christoffels A."/>
            <person name="Clutterbuck D.R."/>
            <person name="Crowe M.L."/>
            <person name="Dalla E."/>
            <person name="Dalrymple B.P."/>
            <person name="de Bono B."/>
            <person name="Della Gatta G."/>
            <person name="di Bernardo D."/>
            <person name="Down T."/>
            <person name="Engstrom P."/>
            <person name="Fagiolini M."/>
            <person name="Faulkner G."/>
            <person name="Fletcher C.F."/>
            <person name="Fukushima T."/>
            <person name="Furuno M."/>
            <person name="Futaki S."/>
            <person name="Gariboldi M."/>
            <person name="Georgii-Hemming P."/>
            <person name="Gingeras T.R."/>
            <person name="Gojobori T."/>
            <person name="Green R.E."/>
            <person name="Gustincich S."/>
            <person name="Harbers M."/>
            <person name="Hayashi Y."/>
            <person name="Hensch T.K."/>
            <person name="Hirokawa N."/>
            <person name="Hill D."/>
            <person name="Huminiecki L."/>
            <person name="Iacono M."/>
            <person name="Ikeo K."/>
            <person name="Iwama A."/>
            <person name="Ishikawa T."/>
            <person name="Jakt M."/>
            <person name="Kanapin A."/>
            <person name="Katoh M."/>
            <person name="Kawasawa Y."/>
            <person name="Kelso J."/>
            <person name="Kitamura H."/>
            <person name="Kitano H."/>
            <person name="Kollias G."/>
            <person name="Krishnan S.P."/>
            <person name="Kruger A."/>
            <person name="Kummerfeld S.K."/>
            <person name="Kurochkin I.V."/>
            <person name="Lareau L.F."/>
            <person name="Lazarevic D."/>
            <person name="Lipovich L."/>
            <person name="Liu J."/>
            <person name="Liuni S."/>
            <person name="McWilliam S."/>
            <person name="Madan Babu M."/>
            <person name="Madera M."/>
            <person name="Marchionni L."/>
            <person name="Matsuda H."/>
            <person name="Matsuzawa S."/>
            <person name="Miki H."/>
            <person name="Mignone F."/>
            <person name="Miyake S."/>
            <person name="Morris K."/>
            <person name="Mottagui-Tabar S."/>
            <person name="Mulder N."/>
            <person name="Nakano N."/>
            <person name="Nakauchi H."/>
            <person name="Ng P."/>
            <person name="Nilsson R."/>
            <person name="Nishiguchi S."/>
            <person name="Nishikawa S."/>
            <person name="Nori F."/>
            <person name="Ohara O."/>
            <person name="Okazaki Y."/>
            <person name="Orlando V."/>
            <person name="Pang K.C."/>
            <person name="Pavan W.J."/>
            <person name="Pavesi G."/>
            <person name="Pesole G."/>
            <person name="Petrovsky N."/>
            <person name="Piazza S."/>
            <person name="Reed J."/>
            <person name="Reid J.F."/>
            <person name="Ring B.Z."/>
            <person name="Ringwald M."/>
            <person name="Rost B."/>
            <person name="Ruan Y."/>
            <person name="Salzberg S.L."/>
            <person name="Sandelin A."/>
            <person name="Schneider C."/>
            <person name="Schoenbach C."/>
            <person name="Sekiguchi K."/>
            <person name="Semple C.A."/>
            <person name="Seno S."/>
            <person name="Sessa L."/>
            <person name="Sheng Y."/>
            <person name="Shibata Y."/>
            <person name="Shimada H."/>
            <person name="Shimada K."/>
            <person name="Silva D."/>
            <person name="Sinclair B."/>
            <person name="Sperling S."/>
            <person name="Stupka E."/>
            <person name="Sugiura K."/>
            <person name="Sultana R."/>
            <person name="Takenaka Y."/>
            <person name="Taki K."/>
            <person name="Tammoja K."/>
            <person name="Tan S.L."/>
            <person name="Tang S."/>
            <person name="Taylor M.S."/>
            <person name="Tegner J."/>
            <person name="Teichmann S.A."/>
            <person name="Ueda H.R."/>
            <person name="van Nimwegen E."/>
            <person name="Verardo R."/>
            <person name="Wei C.L."/>
            <person name="Yagi K."/>
            <person name="Yamanishi H."/>
            <person name="Zabarovsky E."/>
            <person name="Zhu S."/>
            <person name="Zimmer A."/>
            <person name="Hide W."/>
            <person name="Bult C."/>
            <person name="Grimmond S.M."/>
            <person name="Teasdale R.D."/>
            <person name="Liu E.T."/>
            <person name="Brusic V."/>
            <person name="Quackenbush J."/>
            <person name="Wahlestedt C."/>
            <person name="Mattick J.S."/>
            <person name="Hume D.A."/>
            <person name="Kai C."/>
            <person name="Sasaki D."/>
            <person name="Tomaru Y."/>
            <person name="Fukuda S."/>
            <person name="Kanamori-Katayama M."/>
            <person name="Suzuki M."/>
            <person name="Aoki J."/>
            <person name="Arakawa T."/>
            <person name="Iida J."/>
            <person name="Imamura K."/>
            <person name="Itoh M."/>
            <person name="Kato T."/>
            <person name="Kawaji H."/>
            <person name="Kawagashira N."/>
            <person name="Kawashima T."/>
            <person name="Kojima M."/>
            <person name="Kondo S."/>
            <person name="Konno H."/>
            <person name="Nakano K."/>
            <person name="Ninomiya N."/>
            <person name="Nishio T."/>
            <person name="Okada M."/>
            <person name="Plessy C."/>
            <person name="Shibata K."/>
            <person name="Shiraki T."/>
            <person name="Suzuki S."/>
            <person name="Tagami M."/>
            <person name="Waki K."/>
            <person name="Watahiki A."/>
            <person name="Okamura-Oho Y."/>
            <person name="Suzuki H."/>
            <person name="Kawai J."/>
            <person name="Hayashizaki Y."/>
        </authorList>
    </citation>
    <scope>NUCLEOTIDE SEQUENCE [LARGE SCALE MRNA]</scope>
    <source>
        <strain>C57BL/6J</strain>
        <tissue>Liver</tissue>
    </source>
</reference>
<reference key="2">
    <citation type="journal article" date="2004" name="Genome Res.">
        <title>The status, quality, and expansion of the NIH full-length cDNA project: the Mammalian Gene Collection (MGC).</title>
        <authorList>
            <consortium name="The MGC Project Team"/>
        </authorList>
    </citation>
    <scope>NUCLEOTIDE SEQUENCE [LARGE SCALE MRNA]</scope>
    <source>
        <strain>FVB/N</strain>
        <tissue>Mammary tumor</tissue>
    </source>
</reference>
<reference key="3">
    <citation type="journal article" date="2010" name="Cell">
        <title>A tissue-specific atlas of mouse protein phosphorylation and expression.</title>
        <authorList>
            <person name="Huttlin E.L."/>
            <person name="Jedrychowski M.P."/>
            <person name="Elias J.E."/>
            <person name="Goswami T."/>
            <person name="Rad R."/>
            <person name="Beausoleil S.A."/>
            <person name="Villen J."/>
            <person name="Haas W."/>
            <person name="Sowa M.E."/>
            <person name="Gygi S.P."/>
        </authorList>
    </citation>
    <scope>IDENTIFICATION BY MASS SPECTROMETRY [LARGE SCALE ANALYSIS]</scope>
    <source>
        <tissue>Brown adipose tissue</tissue>
        <tissue>Kidney</tissue>
        <tissue>Liver</tissue>
    </source>
</reference>
<reference key="4">
    <citation type="journal article" date="2013" name="Mol. Cell">
        <title>SIRT5-mediated lysine desuccinylation impacts diverse metabolic pathways.</title>
        <authorList>
            <person name="Park J."/>
            <person name="Chen Y."/>
            <person name="Tishkoff D.X."/>
            <person name="Peng C."/>
            <person name="Tan M."/>
            <person name="Dai L."/>
            <person name="Xie Z."/>
            <person name="Zhang Y."/>
            <person name="Zwaans B.M."/>
            <person name="Skinner M.E."/>
            <person name="Lombard D.B."/>
            <person name="Zhao Y."/>
        </authorList>
    </citation>
    <scope>SUCCINYLATION [LARGE SCALE ANALYSIS] AT LYS-413; LYS-427 AND LYS-1052</scope>
    <scope>IDENTIFICATION BY MASS SPECTROMETRY [LARGE SCALE ANALYSIS]</scope>
    <source>
        <tissue>Liver</tissue>
    </source>
</reference>
<reference key="5">
    <citation type="journal article" date="2013" name="Proc. Natl. Acad. Sci. U.S.A.">
        <title>Label-free quantitative proteomics of the lysine acetylome in mitochondria identifies substrates of SIRT3 in metabolic pathways.</title>
        <authorList>
            <person name="Rardin M.J."/>
            <person name="Newman J.C."/>
            <person name="Held J.M."/>
            <person name="Cusack M.P."/>
            <person name="Sorensen D.J."/>
            <person name="Li B."/>
            <person name="Schilling B."/>
            <person name="Mooney S.D."/>
            <person name="Kahn C.R."/>
            <person name="Verdin E."/>
            <person name="Gibson B.W."/>
        </authorList>
    </citation>
    <scope>ACETYLATION [LARGE SCALE ANALYSIS] AT LYS-427 AND LYS-1052</scope>
    <scope>IDENTIFICATION BY MASS SPECTROMETRY [LARGE SCALE ANALYSIS]</scope>
    <source>
        <tissue>Liver</tissue>
    </source>
</reference>
<evidence type="ECO:0000250" key="1"/>
<evidence type="ECO:0000305" key="2"/>
<evidence type="ECO:0007744" key="3">
    <source>
    </source>
</evidence>
<evidence type="ECO:0007744" key="4">
    <source>
    </source>
</evidence>
<protein>
    <recommendedName>
        <fullName>Acyl-CoA dehydrogenase family member 10</fullName>
        <shortName>ACAD-10</shortName>
        <ecNumber>1.3.99.-</ecNumber>
    </recommendedName>
</protein>
<keyword id="KW-0007">Acetylation</keyword>
<keyword id="KW-0274">FAD</keyword>
<keyword id="KW-0285">Flavoprotein</keyword>
<keyword id="KW-0560">Oxidoreductase</keyword>
<keyword id="KW-1185">Reference proteome</keyword>
<proteinExistence type="evidence at protein level"/>
<organism>
    <name type="scientific">Mus musculus</name>
    <name type="common">Mouse</name>
    <dbReference type="NCBI Taxonomy" id="10090"/>
    <lineage>
        <taxon>Eukaryota</taxon>
        <taxon>Metazoa</taxon>
        <taxon>Chordata</taxon>
        <taxon>Craniata</taxon>
        <taxon>Vertebrata</taxon>
        <taxon>Euteleostomi</taxon>
        <taxon>Mammalia</taxon>
        <taxon>Eutheria</taxon>
        <taxon>Euarchontoglires</taxon>
        <taxon>Glires</taxon>
        <taxon>Rodentia</taxon>
        <taxon>Myomorpha</taxon>
        <taxon>Muroidea</taxon>
        <taxon>Muridae</taxon>
        <taxon>Murinae</taxon>
        <taxon>Mus</taxon>
        <taxon>Mus</taxon>
    </lineage>
</organism>
<accession>Q8K370</accession>
<accession>Q8BWQ0</accession>
<accession>Q8K313</accession>
<comment type="function">
    <text evidence="1">Acyl-CoA dehydrogenase only active with R- and S-2-methyl-C15-CoA.</text>
</comment>
<comment type="catalytic activity">
    <reaction>
        <text>a 2,3-saturated acyl-CoA + A = a 2,3-dehydroacyl-CoA + AH2</text>
        <dbReference type="Rhea" id="RHEA:48608"/>
        <dbReference type="ChEBI" id="CHEBI:13193"/>
        <dbReference type="ChEBI" id="CHEBI:17499"/>
        <dbReference type="ChEBI" id="CHEBI:60015"/>
        <dbReference type="ChEBI" id="CHEBI:65111"/>
    </reaction>
</comment>
<comment type="cofactor">
    <cofactor evidence="1">
        <name>FAD</name>
        <dbReference type="ChEBI" id="CHEBI:57692"/>
    </cofactor>
</comment>
<comment type="similarity">
    <text evidence="2">Belongs to the acyl-CoA dehydrogenase family.</text>
</comment>
<comment type="sequence caution" evidence="2">
    <conflict type="erroneous initiation">
        <sequence resource="EMBL-CDS" id="AAH29047"/>
    </conflict>
</comment>
<comment type="sequence caution" evidence="2">
    <conflict type="frameshift">
        <sequence resource="EMBL-CDS" id="BAC34193"/>
    </conflict>
</comment>
<feature type="chain" id="PRO_0000284771" description="Acyl-CoA dehydrogenase family member 10">
    <location>
        <begin position="1"/>
        <end position="1069"/>
    </location>
</feature>
<feature type="binding site" evidence="1">
    <location>
        <begin position="792"/>
        <end position="802"/>
    </location>
    <ligand>
        <name>FAD</name>
        <dbReference type="ChEBI" id="CHEBI:57692"/>
    </ligand>
</feature>
<feature type="binding site" evidence="1">
    <location>
        <position position="828"/>
    </location>
    <ligand>
        <name>FAD</name>
        <dbReference type="ChEBI" id="CHEBI:57692"/>
    </ligand>
</feature>
<feature type="binding site" evidence="1">
    <location>
        <position position="943"/>
    </location>
    <ligand>
        <name>FAD</name>
        <dbReference type="ChEBI" id="CHEBI:57692"/>
    </ligand>
</feature>
<feature type="binding site" evidence="1">
    <location>
        <position position="1013"/>
    </location>
    <ligand>
        <name>FAD</name>
        <dbReference type="ChEBI" id="CHEBI:57692"/>
    </ligand>
</feature>
<feature type="binding site" evidence="1">
    <location>
        <position position="1044"/>
    </location>
    <ligand>
        <name>FAD</name>
        <dbReference type="ChEBI" id="CHEBI:57692"/>
    </ligand>
</feature>
<feature type="modified residue" description="N6-succinyllysine" evidence="4">
    <location>
        <position position="413"/>
    </location>
</feature>
<feature type="modified residue" description="N6-acetyllysine; alternate" evidence="3">
    <location>
        <position position="427"/>
    </location>
</feature>
<feature type="modified residue" description="N6-succinyllysine; alternate" evidence="4">
    <location>
        <position position="427"/>
    </location>
</feature>
<feature type="modified residue" description="N6-acetyllysine; alternate" evidence="3">
    <location>
        <position position="1052"/>
    </location>
</feature>
<feature type="modified residue" description="N6-succinyllysine; alternate" evidence="4">
    <location>
        <position position="1052"/>
    </location>
</feature>
<feature type="sequence conflict" description="In Ref. 2; AAH29047." evidence="2" ref="2">
    <original>IL</original>
    <variation>MM</variation>
    <location>
        <begin position="511"/>
        <end position="512"/>
    </location>
</feature>
<name>ACD10_MOUSE</name>